<proteinExistence type="evidence at protein level"/>
<organism>
    <name type="scientific">Pseudomonas phage phi6</name>
    <name type="common">Bacteriophage phi-6</name>
    <dbReference type="NCBI Taxonomy" id="2928686"/>
    <lineage>
        <taxon>Viruses</taxon>
        <taxon>Riboviria</taxon>
        <taxon>Orthornavirae</taxon>
        <taxon>Duplornaviricota</taxon>
        <taxon>Vidaverviricetes</taxon>
        <taxon>Mindivirales</taxon>
        <taxon>Cystoviridae</taxon>
        <taxon>Cystovirus</taxon>
        <taxon>Cystovirus phi6</taxon>
    </lineage>
</organism>
<reference key="1">
    <citation type="journal article" date="1988" name="J. Virol.">
        <title>Nucleotide sequence of the large double-stranded RNA segment of bacteriophage phi 6: genes specifying the viral replicase and transcriptase.</title>
        <authorList>
            <person name="Mindich L."/>
            <person name="Nemhauser I."/>
            <person name="Gottlieb P."/>
            <person name="Romantschuk M."/>
            <person name="Carton J."/>
            <person name="Frucht S."/>
            <person name="Strassman J."/>
            <person name="Bamford D.H."/>
            <person name="Kalkkinen N."/>
        </authorList>
    </citation>
    <scope>NUCLEOTIDE SEQUENCE [GENOMIC RNA]</scope>
    <scope>PARTIAL PROTEIN SEQUENCE</scope>
</reference>
<reference key="2">
    <citation type="journal article" date="1997" name="J. Mol. Biol.">
        <title>Protein P7 of phage phi6 RNA polymerase complex, acquiring of RNA packaging activity by in vitro assembly of the purified protein onto deficient particles.</title>
        <authorList>
            <person name="Juuti J.T."/>
            <person name="Bamford D.H."/>
        </authorList>
    </citation>
    <scope>FUNCTION</scope>
</reference>
<reference key="3">
    <citation type="journal article" date="2008" name="J. Mol. Biol.">
        <title>Roles of the minor capsid protein P7 in the assembly and replication of double-stranded RNA bacteriophage phi6.</title>
        <authorList>
            <person name="Poranen M.M."/>
            <person name="Butcher S.J."/>
            <person name="Simonov V.M."/>
            <person name="Laurinmaki P."/>
            <person name="Bamford D.H."/>
        </authorList>
    </citation>
    <scope>SUBUNIT</scope>
    <scope>FUNCTION</scope>
</reference>
<reference key="4">
    <citation type="journal article" date="2012" name="J. Virol.">
        <title>Packaging accessory protein P7 and polymerase P2 have mutually occluding binding sites inside the bacteriophage 6 procapsid.</title>
        <authorList>
            <person name="Nemecek D."/>
            <person name="Qiao J."/>
            <person name="Mindich L."/>
            <person name="Steven A.C."/>
            <person name="Heymann J.B."/>
        </authorList>
    </citation>
    <scope>SUBCELLULAR LOCATION</scope>
    <scope>FUNCTION</scope>
</reference>
<reference key="5">
    <citation type="journal article" date="2012" name="PLoS ONE">
        <title>Protein P7 of the cystovirus phi6 is located at the three-fold axis of the unexpanded procapsid.</title>
        <authorList>
            <person name="Katz G."/>
            <person name="Wei H."/>
            <person name="Alimova A."/>
            <person name="Katz A."/>
            <person name="Morgan D.G."/>
            <person name="Gottlieb P."/>
        </authorList>
    </citation>
    <scope>STRUCTURE BY ELECTRON MICROSCOPY OF VIRAL PARTICLE</scope>
    <scope>SUBCELLULAR LOCATION</scope>
    <scope>FUNCTION</scope>
    <scope>INTERACTION WITH RDRP</scope>
    <scope>IDENTIFICATION IN THE PACKAGING COMPLEX</scope>
</reference>
<feature type="chain" id="PRO_0000164641" description="Assembly protein P7">
    <location>
        <begin position="1"/>
        <end position="161"/>
    </location>
</feature>
<keyword id="KW-0903">Direct protein sequencing</keyword>
<keyword id="KW-1185">Reference proteome</keyword>
<keyword id="KW-0804">Transcription</keyword>
<keyword id="KW-0118">Viral capsid assembly</keyword>
<keyword id="KW-0231">Viral genome packaging</keyword>
<keyword id="KW-1188">Viral release from host cell</keyword>
<keyword id="KW-0946">Virion</keyword>
<gene>
    <name type="primary">P7</name>
</gene>
<name>P7_BPPH6</name>
<comment type="function">
    <text evidence="1 2 3 4">Assembly protein part of the packaging complex that packages the viral RNA segments, replicate them into a double-stranded form and transcribe them. Required for efficient procapsid assembly. Necessary for stable packaging. May stabilize the RNA-dependent RNA polymerase (RdRP) in its position at the three-fold axis on the inner side of empty-unexpanded procapsids. Could play a role in viral RNA recognition. Seems to be involved in the regulation of plus strand synthesis (transcription) as a fidelity factor.</text>
</comment>
<comment type="subunit">
    <text evidence="6 7">Homodimer. Part of the packaging complex composed of RDRP, P4 and P7. Interacts with RDRP (Probable).</text>
</comment>
<comment type="subcellular location">
    <subcellularLocation>
        <location evidence="5">Virion</location>
    </subcellularLocation>
    <text evidence="2 3 5">Found in the capsid (Probable). Prior to RNA packaging, localizes on the inner procapsid surface near the three-fold axis of symmetry.</text>
</comment>
<sequence>MTLYLVPPLDSADKELPALASKAGVTLLEIEFLHELWPHLSGGQIVIAALNANNLAILNRHMSTLLVELPVAVMAVPGASYRSDWNMIAHALPSEDWITLSNKMLKSGLLANDTVQGEKRSGAEPLSPNVYTDALSRLGIATAHAIPVEPEQPFDVDEVSA</sequence>
<accession>P11123</accession>
<evidence type="ECO:0000269" key="1">
    <source>
    </source>
</evidence>
<evidence type="ECO:0000269" key="2">
    <source>
    </source>
</evidence>
<evidence type="ECO:0000269" key="3">
    <source>
    </source>
</evidence>
<evidence type="ECO:0000269" key="4">
    <source>
    </source>
</evidence>
<evidence type="ECO:0000305" key="5"/>
<evidence type="ECO:0000305" key="6">
    <source>
    </source>
</evidence>
<evidence type="ECO:0000305" key="7">
    <source>
    </source>
</evidence>
<dbReference type="EMBL" id="M17461">
    <property type="protein sequence ID" value="AAA32354.1"/>
    <property type="molecule type" value="Genomic_RNA"/>
</dbReference>
<dbReference type="PIR" id="A29885">
    <property type="entry name" value="P7BPF6"/>
</dbReference>
<dbReference type="RefSeq" id="NP_620345.1">
    <property type="nucleotide sequence ID" value="NC_003715.1"/>
</dbReference>
<dbReference type="KEGG" id="vg:956435"/>
<dbReference type="Proteomes" id="UP000002610">
    <property type="component" value="Genome"/>
</dbReference>
<dbReference type="GO" id="GO:0044423">
    <property type="term" value="C:virion component"/>
    <property type="evidence" value="ECO:0007669"/>
    <property type="project" value="UniProtKB-KW"/>
</dbReference>
<organismHost>
    <name type="scientific">Pseudomonas savastanoi pv. phaseolicola</name>
    <name type="common">Pseudomonas syringae pv. phaseolicola</name>
    <dbReference type="NCBI Taxonomy" id="319"/>
</organismHost>
<protein>
    <recommendedName>
        <fullName>Assembly protein P7</fullName>
    </recommendedName>
</protein>